<feature type="chain" id="PRO_1000008986" description="Sulfate adenylyltransferase subunit 2">
    <location>
        <begin position="1"/>
        <end position="301"/>
    </location>
</feature>
<comment type="function">
    <text evidence="1">With CysN forms the ATP sulfurylase (ATPS) that catalyzes the adenylation of sulfate producing adenosine 5'-phosphosulfate (APS) and diphosphate, the first enzymatic step in sulfur assimilation pathway. APS synthesis involves the formation of a high-energy phosphoric-sulfuric acid anhydride bond driven by GTP hydrolysis by CysN coupled to ATP hydrolysis by CysD.</text>
</comment>
<comment type="catalytic activity">
    <reaction evidence="1">
        <text>sulfate + ATP + H(+) = adenosine 5'-phosphosulfate + diphosphate</text>
        <dbReference type="Rhea" id="RHEA:18133"/>
        <dbReference type="ChEBI" id="CHEBI:15378"/>
        <dbReference type="ChEBI" id="CHEBI:16189"/>
        <dbReference type="ChEBI" id="CHEBI:30616"/>
        <dbReference type="ChEBI" id="CHEBI:33019"/>
        <dbReference type="ChEBI" id="CHEBI:58243"/>
        <dbReference type="EC" id="2.7.7.4"/>
    </reaction>
</comment>
<comment type="pathway">
    <text evidence="1">Sulfur metabolism; hydrogen sulfide biosynthesis; sulfite from sulfate: step 1/3.</text>
</comment>
<comment type="subunit">
    <text evidence="1">Heterodimer composed of CysD, the smaller subunit, and CysN.</text>
</comment>
<comment type="similarity">
    <text evidence="1">Belongs to the PAPS reductase family. CysD subfamily.</text>
</comment>
<keyword id="KW-0067">ATP-binding</keyword>
<keyword id="KW-0547">Nucleotide-binding</keyword>
<keyword id="KW-0548">Nucleotidyltransferase</keyword>
<keyword id="KW-1185">Reference proteome</keyword>
<keyword id="KW-0808">Transferase</keyword>
<protein>
    <recommendedName>
        <fullName evidence="1">Sulfate adenylyltransferase subunit 2</fullName>
        <ecNumber evidence="1">2.7.7.4</ecNumber>
    </recommendedName>
    <alternativeName>
        <fullName evidence="1">ATP-sulfurylase small subunit</fullName>
    </alternativeName>
    <alternativeName>
        <fullName evidence="1">Sulfate adenylate transferase</fullName>
        <shortName evidence="1">SAT</shortName>
    </alternativeName>
</protein>
<sequence length="301" mass="34884">MSTQQTHLKQLEAESIQIMREVAAEFENPVMLYSVGKDSSVLLHLARKAFYPGKIPFPLLHVDTNWKFKEMIEFRDRMAKQYGFDLIVHKNPRGLEMNISPFTHGSAKHTDIMKTEGLKQALDMHGFDAAFGGARRDEEKSRAKERVYSFRDSKHRWDPKNQRPELWNIYNGKVDKGESIRVFPLSNWTELDIWQYIYLENIEIPSLYLAEPRPVVKRDGTLIMVDDERMELEPGEAVEQKMVRFRTLGCYPLTGAVESQATTLPEIIQEMLLCTTSERQGRVIDNDSAGSMEKKKMEGYF</sequence>
<accession>A3QCU1</accession>
<proteinExistence type="inferred from homology"/>
<evidence type="ECO:0000255" key="1">
    <source>
        <dbReference type="HAMAP-Rule" id="MF_00064"/>
    </source>
</evidence>
<name>CYSD_SHELP</name>
<gene>
    <name evidence="1" type="primary">cysD</name>
    <name type="ordered locus">Shew_1422</name>
</gene>
<dbReference type="EC" id="2.7.7.4" evidence="1"/>
<dbReference type="EMBL" id="CP000606">
    <property type="protein sequence ID" value="ABO23289.1"/>
    <property type="molecule type" value="Genomic_DNA"/>
</dbReference>
<dbReference type="RefSeq" id="WP_011865221.1">
    <property type="nucleotide sequence ID" value="NC_009092.1"/>
</dbReference>
<dbReference type="SMR" id="A3QCU1"/>
<dbReference type="STRING" id="323850.Shew_1422"/>
<dbReference type="KEGG" id="slo:Shew_1422"/>
<dbReference type="eggNOG" id="COG0175">
    <property type="taxonomic scope" value="Bacteria"/>
</dbReference>
<dbReference type="HOGENOM" id="CLU_043026_0_0_6"/>
<dbReference type="OrthoDB" id="9772604at2"/>
<dbReference type="UniPathway" id="UPA00140">
    <property type="reaction ID" value="UER00204"/>
</dbReference>
<dbReference type="Proteomes" id="UP000001558">
    <property type="component" value="Chromosome"/>
</dbReference>
<dbReference type="GO" id="GO:0005524">
    <property type="term" value="F:ATP binding"/>
    <property type="evidence" value="ECO:0007669"/>
    <property type="project" value="UniProtKB-KW"/>
</dbReference>
<dbReference type="GO" id="GO:0004781">
    <property type="term" value="F:sulfate adenylyltransferase (ATP) activity"/>
    <property type="evidence" value="ECO:0007669"/>
    <property type="project" value="UniProtKB-UniRule"/>
</dbReference>
<dbReference type="GO" id="GO:0070814">
    <property type="term" value="P:hydrogen sulfide biosynthetic process"/>
    <property type="evidence" value="ECO:0007669"/>
    <property type="project" value="UniProtKB-UniRule"/>
</dbReference>
<dbReference type="GO" id="GO:0000103">
    <property type="term" value="P:sulfate assimilation"/>
    <property type="evidence" value="ECO:0007669"/>
    <property type="project" value="UniProtKB-UniRule"/>
</dbReference>
<dbReference type="CDD" id="cd23946">
    <property type="entry name" value="Sulfate_adenylyltransferase_2"/>
    <property type="match status" value="1"/>
</dbReference>
<dbReference type="FunFam" id="3.40.50.620:FF:000002">
    <property type="entry name" value="Sulfate adenylyltransferase subunit 2"/>
    <property type="match status" value="1"/>
</dbReference>
<dbReference type="Gene3D" id="3.40.50.620">
    <property type="entry name" value="HUPs"/>
    <property type="match status" value="1"/>
</dbReference>
<dbReference type="HAMAP" id="MF_00064">
    <property type="entry name" value="Sulf_adenylyltr_sub2"/>
    <property type="match status" value="1"/>
</dbReference>
<dbReference type="InterPro" id="IPR002500">
    <property type="entry name" value="PAPS_reduct_dom"/>
</dbReference>
<dbReference type="InterPro" id="IPR014729">
    <property type="entry name" value="Rossmann-like_a/b/a_fold"/>
</dbReference>
<dbReference type="InterPro" id="IPR011784">
    <property type="entry name" value="SO4_adenylTrfase_ssu"/>
</dbReference>
<dbReference type="InterPro" id="IPR050128">
    <property type="entry name" value="Sulfate_adenylyltrnsfr_sub2"/>
</dbReference>
<dbReference type="NCBIfam" id="TIGR02039">
    <property type="entry name" value="CysD"/>
    <property type="match status" value="1"/>
</dbReference>
<dbReference type="NCBIfam" id="NF003587">
    <property type="entry name" value="PRK05253.1"/>
    <property type="match status" value="1"/>
</dbReference>
<dbReference type="NCBIfam" id="NF009214">
    <property type="entry name" value="PRK12563.1"/>
    <property type="match status" value="1"/>
</dbReference>
<dbReference type="PANTHER" id="PTHR43196">
    <property type="entry name" value="SULFATE ADENYLYLTRANSFERASE SUBUNIT 2"/>
    <property type="match status" value="1"/>
</dbReference>
<dbReference type="PANTHER" id="PTHR43196:SF1">
    <property type="entry name" value="SULFATE ADENYLYLTRANSFERASE SUBUNIT 2"/>
    <property type="match status" value="1"/>
</dbReference>
<dbReference type="Pfam" id="PF01507">
    <property type="entry name" value="PAPS_reduct"/>
    <property type="match status" value="1"/>
</dbReference>
<dbReference type="PIRSF" id="PIRSF002936">
    <property type="entry name" value="CysDAde_trans"/>
    <property type="match status" value="1"/>
</dbReference>
<dbReference type="SUPFAM" id="SSF52402">
    <property type="entry name" value="Adenine nucleotide alpha hydrolases-like"/>
    <property type="match status" value="1"/>
</dbReference>
<reference key="1">
    <citation type="submission" date="2007-03" db="EMBL/GenBank/DDBJ databases">
        <title>Complete sequence of Shewanella loihica PV-4.</title>
        <authorList>
            <consortium name="US DOE Joint Genome Institute"/>
            <person name="Copeland A."/>
            <person name="Lucas S."/>
            <person name="Lapidus A."/>
            <person name="Barry K."/>
            <person name="Detter J.C."/>
            <person name="Glavina del Rio T."/>
            <person name="Hammon N."/>
            <person name="Israni S."/>
            <person name="Dalin E."/>
            <person name="Tice H."/>
            <person name="Pitluck S."/>
            <person name="Chain P."/>
            <person name="Malfatti S."/>
            <person name="Shin M."/>
            <person name="Vergez L."/>
            <person name="Schmutz J."/>
            <person name="Larimer F."/>
            <person name="Land M."/>
            <person name="Hauser L."/>
            <person name="Kyrpides N."/>
            <person name="Mikhailova N."/>
            <person name="Romine M.F."/>
            <person name="Serres G."/>
            <person name="Fredrickson J."/>
            <person name="Tiedje J."/>
            <person name="Richardson P."/>
        </authorList>
    </citation>
    <scope>NUCLEOTIDE SEQUENCE [LARGE SCALE GENOMIC DNA]</scope>
    <source>
        <strain>ATCC BAA-1088 / PV-4</strain>
    </source>
</reference>
<organism>
    <name type="scientific">Shewanella loihica (strain ATCC BAA-1088 / PV-4)</name>
    <dbReference type="NCBI Taxonomy" id="323850"/>
    <lineage>
        <taxon>Bacteria</taxon>
        <taxon>Pseudomonadati</taxon>
        <taxon>Pseudomonadota</taxon>
        <taxon>Gammaproteobacteria</taxon>
        <taxon>Alteromonadales</taxon>
        <taxon>Shewanellaceae</taxon>
        <taxon>Shewanella</taxon>
    </lineage>
</organism>